<protein>
    <recommendedName>
        <fullName evidence="1">Probable nicotinate-nucleotide adenylyltransferase</fullName>
        <ecNumber evidence="1">2.7.7.18</ecNumber>
    </recommendedName>
    <alternativeName>
        <fullName evidence="1">Deamido-NAD(+) diphosphorylase</fullName>
    </alternativeName>
    <alternativeName>
        <fullName evidence="1">Deamido-NAD(+) pyrophosphorylase</fullName>
    </alternativeName>
    <alternativeName>
        <fullName evidence="1">Nicotinate mononucleotide adenylyltransferase</fullName>
        <shortName evidence="1">NaMN adenylyltransferase</shortName>
    </alternativeName>
</protein>
<proteinExistence type="inferred from homology"/>
<evidence type="ECO:0000255" key="1">
    <source>
        <dbReference type="HAMAP-Rule" id="MF_00244"/>
    </source>
</evidence>
<dbReference type="EC" id="2.7.7.18" evidence="1"/>
<dbReference type="EMBL" id="CP001099">
    <property type="protein sequence ID" value="ACF12434.1"/>
    <property type="molecule type" value="Genomic_DNA"/>
</dbReference>
<dbReference type="RefSeq" id="WP_012503267.1">
    <property type="nucleotide sequence ID" value="NC_011027.1"/>
</dbReference>
<dbReference type="SMR" id="B3QLU8"/>
<dbReference type="STRING" id="517417.Cpar_2047"/>
<dbReference type="KEGG" id="cpc:Cpar_2047"/>
<dbReference type="eggNOG" id="COG1057">
    <property type="taxonomic scope" value="Bacteria"/>
</dbReference>
<dbReference type="HOGENOM" id="CLU_069765_3_2_10"/>
<dbReference type="OrthoDB" id="5295945at2"/>
<dbReference type="UniPathway" id="UPA00253">
    <property type="reaction ID" value="UER00332"/>
</dbReference>
<dbReference type="Proteomes" id="UP000008811">
    <property type="component" value="Chromosome"/>
</dbReference>
<dbReference type="GO" id="GO:0005524">
    <property type="term" value="F:ATP binding"/>
    <property type="evidence" value="ECO:0007669"/>
    <property type="project" value="UniProtKB-KW"/>
</dbReference>
<dbReference type="GO" id="GO:0004515">
    <property type="term" value="F:nicotinate-nucleotide adenylyltransferase activity"/>
    <property type="evidence" value="ECO:0007669"/>
    <property type="project" value="UniProtKB-UniRule"/>
</dbReference>
<dbReference type="GO" id="GO:0009435">
    <property type="term" value="P:NAD biosynthetic process"/>
    <property type="evidence" value="ECO:0007669"/>
    <property type="project" value="UniProtKB-UniRule"/>
</dbReference>
<dbReference type="CDD" id="cd02165">
    <property type="entry name" value="NMNAT"/>
    <property type="match status" value="1"/>
</dbReference>
<dbReference type="Gene3D" id="3.40.50.620">
    <property type="entry name" value="HUPs"/>
    <property type="match status" value="1"/>
</dbReference>
<dbReference type="HAMAP" id="MF_00244">
    <property type="entry name" value="NaMN_adenylyltr"/>
    <property type="match status" value="1"/>
</dbReference>
<dbReference type="InterPro" id="IPR004821">
    <property type="entry name" value="Cyt_trans-like"/>
</dbReference>
<dbReference type="InterPro" id="IPR005248">
    <property type="entry name" value="NadD/NMNAT"/>
</dbReference>
<dbReference type="InterPro" id="IPR014729">
    <property type="entry name" value="Rossmann-like_a/b/a_fold"/>
</dbReference>
<dbReference type="NCBIfam" id="TIGR00125">
    <property type="entry name" value="cyt_tran_rel"/>
    <property type="match status" value="1"/>
</dbReference>
<dbReference type="NCBIfam" id="TIGR00482">
    <property type="entry name" value="nicotinate (nicotinamide) nucleotide adenylyltransferase"/>
    <property type="match status" value="1"/>
</dbReference>
<dbReference type="PANTHER" id="PTHR39321">
    <property type="entry name" value="NICOTINATE-NUCLEOTIDE ADENYLYLTRANSFERASE-RELATED"/>
    <property type="match status" value="1"/>
</dbReference>
<dbReference type="PANTHER" id="PTHR39321:SF3">
    <property type="entry name" value="PHOSPHOPANTETHEINE ADENYLYLTRANSFERASE"/>
    <property type="match status" value="1"/>
</dbReference>
<dbReference type="Pfam" id="PF01467">
    <property type="entry name" value="CTP_transf_like"/>
    <property type="match status" value="1"/>
</dbReference>
<dbReference type="SUPFAM" id="SSF52374">
    <property type="entry name" value="Nucleotidylyl transferase"/>
    <property type="match status" value="1"/>
</dbReference>
<reference key="1">
    <citation type="submission" date="2008-06" db="EMBL/GenBank/DDBJ databases">
        <title>Complete sequence of Chlorobaculum parvum NCIB 8327.</title>
        <authorList>
            <consortium name="US DOE Joint Genome Institute"/>
            <person name="Lucas S."/>
            <person name="Copeland A."/>
            <person name="Lapidus A."/>
            <person name="Glavina del Rio T."/>
            <person name="Dalin E."/>
            <person name="Tice H."/>
            <person name="Bruce D."/>
            <person name="Goodwin L."/>
            <person name="Pitluck S."/>
            <person name="Schmutz J."/>
            <person name="Larimer F."/>
            <person name="Land M."/>
            <person name="Hauser L."/>
            <person name="Kyrpides N."/>
            <person name="Mikhailova N."/>
            <person name="Zhao F."/>
            <person name="Li T."/>
            <person name="Liu Z."/>
            <person name="Overmann J."/>
            <person name="Bryant D.A."/>
            <person name="Richardson P."/>
        </authorList>
    </citation>
    <scope>NUCLEOTIDE SEQUENCE [LARGE SCALE GENOMIC DNA]</scope>
    <source>
        <strain>DSM 263 / NCIMB 8327</strain>
    </source>
</reference>
<organism>
    <name type="scientific">Chlorobaculum parvum (strain DSM 263 / NCIMB 8327)</name>
    <name type="common">Chlorobium vibrioforme subsp. thiosulfatophilum</name>
    <dbReference type="NCBI Taxonomy" id="517417"/>
    <lineage>
        <taxon>Bacteria</taxon>
        <taxon>Pseudomonadati</taxon>
        <taxon>Chlorobiota</taxon>
        <taxon>Chlorobiia</taxon>
        <taxon>Chlorobiales</taxon>
        <taxon>Chlorobiaceae</taxon>
        <taxon>Chlorobaculum</taxon>
    </lineage>
</organism>
<comment type="function">
    <text evidence="1">Catalyzes the reversible adenylation of nicotinate mononucleotide (NaMN) to nicotinic acid adenine dinucleotide (NaAD).</text>
</comment>
<comment type="catalytic activity">
    <reaction evidence="1">
        <text>nicotinate beta-D-ribonucleotide + ATP + H(+) = deamido-NAD(+) + diphosphate</text>
        <dbReference type="Rhea" id="RHEA:22860"/>
        <dbReference type="ChEBI" id="CHEBI:15378"/>
        <dbReference type="ChEBI" id="CHEBI:30616"/>
        <dbReference type="ChEBI" id="CHEBI:33019"/>
        <dbReference type="ChEBI" id="CHEBI:57502"/>
        <dbReference type="ChEBI" id="CHEBI:58437"/>
        <dbReference type="EC" id="2.7.7.18"/>
    </reaction>
</comment>
<comment type="pathway">
    <text evidence="1">Cofactor biosynthesis; NAD(+) biosynthesis; deamido-NAD(+) from nicotinate D-ribonucleotide: step 1/1.</text>
</comment>
<comment type="similarity">
    <text evidence="1">Belongs to the NadD family.</text>
</comment>
<gene>
    <name evidence="1" type="primary">nadD</name>
    <name type="ordered locus">Cpar_2047</name>
</gene>
<keyword id="KW-0067">ATP-binding</keyword>
<keyword id="KW-0520">NAD</keyword>
<keyword id="KW-0547">Nucleotide-binding</keyword>
<keyword id="KW-0548">Nucleotidyltransferase</keyword>
<keyword id="KW-0662">Pyridine nucleotide biosynthesis</keyword>
<keyword id="KW-0808">Transferase</keyword>
<accession>B3QLU8</accession>
<feature type="chain" id="PRO_1000100767" description="Probable nicotinate-nucleotide adenylyltransferase">
    <location>
        <begin position="1"/>
        <end position="195"/>
    </location>
</feature>
<sequence length="195" mass="21910">MRTGIFGGSFDPPHNGHLAMCLFARELLRLDRLIVSVSRNPFKTGAHASDDDRVSMARLLTDEVNAAGRFAESSSWELETDGPSYTVDLLRHIADLYPDDELLLLVGEDSYRQMGQWKAASEIPRLCQIVYFGREGYENCQHDAEALHLPVRRIDFDMPVSATEIRRLVAAGQPVSQLVPPSINHYIAEHGLYRS</sequence>
<name>NADD_CHLP8</name>